<keyword id="KW-1032">Host cell membrane</keyword>
<keyword id="KW-1043">Host membrane</keyword>
<keyword id="KW-0472">Membrane</keyword>
<keyword id="KW-0964">Secreted</keyword>
<keyword id="KW-0732">Signal</keyword>
<keyword id="KW-0843">Virulence</keyword>
<gene>
    <name evidence="4" type="primary">RXLR143</name>
</gene>
<accession>P0CV59</accession>
<feature type="signal peptide" evidence="1">
    <location>
        <begin position="1"/>
        <end position="18"/>
    </location>
</feature>
<feature type="chain" id="PRO_0000447969" description="Secreted RxLR effector protein 143">
    <location>
        <begin position="19"/>
        <end position="118"/>
    </location>
</feature>
<feature type="region of interest" description="Disordered" evidence="2">
    <location>
        <begin position="35"/>
        <end position="66"/>
    </location>
</feature>
<feature type="short sequence motif" description="RxLR-dEER" evidence="6">
    <location>
        <begin position="49"/>
        <end position="64"/>
    </location>
</feature>
<feature type="compositionally biased region" description="Basic and acidic residues" evidence="2">
    <location>
        <begin position="35"/>
        <end position="65"/>
    </location>
</feature>
<name>RL143_PLAVT</name>
<sequence>MRHCAFLFRLFLIGYSCSVYFSACTQASSLKEPADELPRAEQWDSDGKRILQADDPEHIPTEERGITQNLSPAVESVGKVKASKMAVPKSVISKLNPVNWVKGTWAALKKGFKALQLG</sequence>
<protein>
    <recommendedName>
        <fullName evidence="4">Secreted RxLR effector protein 143</fullName>
    </recommendedName>
</protein>
<dbReference type="GO" id="GO:0005576">
    <property type="term" value="C:extracellular region"/>
    <property type="evidence" value="ECO:0007669"/>
    <property type="project" value="UniProtKB-SubCell"/>
</dbReference>
<dbReference type="GO" id="GO:0020002">
    <property type="term" value="C:host cell plasma membrane"/>
    <property type="evidence" value="ECO:0007669"/>
    <property type="project" value="UniProtKB-SubCell"/>
</dbReference>
<dbReference type="GO" id="GO:0016020">
    <property type="term" value="C:membrane"/>
    <property type="evidence" value="ECO:0007669"/>
    <property type="project" value="UniProtKB-KW"/>
</dbReference>
<evidence type="ECO:0000255" key="1"/>
<evidence type="ECO:0000256" key="2">
    <source>
        <dbReference type="SAM" id="MobiDB-lite"/>
    </source>
</evidence>
<evidence type="ECO:0000269" key="3">
    <source>
    </source>
</evidence>
<evidence type="ECO:0000303" key="4">
    <source>
    </source>
</evidence>
<evidence type="ECO:0000305" key="5"/>
<evidence type="ECO:0000305" key="6">
    <source>
    </source>
</evidence>
<reference key="1">
    <citation type="journal article" date="2018" name="Front. Plant Sci.">
        <title>In planta functional analysis and subcellular localization of the oomycete pathogen Plasmopara viticola candidate RXLR effector repertoire.</title>
        <authorList>
            <person name="Liu Y."/>
            <person name="Lan X."/>
            <person name="Song S."/>
            <person name="Yin L."/>
            <person name="Dry I.B."/>
            <person name="Qu J."/>
            <person name="Xiang J."/>
            <person name="Lu J."/>
        </authorList>
    </citation>
    <scope>NUCLEOTIDE SEQUENCE [MRNA]</scope>
    <scope>DOMAIN</scope>
    <scope>FUNCTION</scope>
    <scope>SUBCELLULAR LOCATION</scope>
</reference>
<proteinExistence type="inferred from homology"/>
<comment type="function">
    <text evidence="3">Secreted effector that completely suppresses the host cell death induced by cell death-inducing proteins.</text>
</comment>
<comment type="subcellular location">
    <subcellularLocation>
        <location evidence="3">Secreted</location>
    </subcellularLocation>
    <subcellularLocation>
        <location evidence="3">Host cell membrane</location>
    </subcellularLocation>
</comment>
<comment type="domain">
    <text evidence="6">The RxLR-dEER motif acts to carry the protein into the host cell cytoplasm through binding to cell surface phosphatidylinositol-3-phosphate.</text>
</comment>
<comment type="similarity">
    <text evidence="5">Belongs to the RxLR effector family.</text>
</comment>
<organism>
    <name type="scientific">Plasmopara viticola</name>
    <name type="common">Downy mildew of grapevine</name>
    <name type="synonym">Botrytis viticola</name>
    <dbReference type="NCBI Taxonomy" id="143451"/>
    <lineage>
        <taxon>Eukaryota</taxon>
        <taxon>Sar</taxon>
        <taxon>Stramenopiles</taxon>
        <taxon>Oomycota</taxon>
        <taxon>Peronosporales</taxon>
        <taxon>Peronosporaceae</taxon>
        <taxon>Plasmopara</taxon>
    </lineage>
</organism>